<gene>
    <name evidence="1" type="primary">der</name>
    <name type="synonym">engA</name>
    <name type="ordered locus">OTBS_1021</name>
</gene>
<comment type="function">
    <text evidence="1">GTPase that plays an essential role in the late steps of ribosome biogenesis.</text>
</comment>
<comment type="subunit">
    <text evidence="1">Associates with the 50S ribosomal subunit.</text>
</comment>
<comment type="similarity">
    <text evidence="1">Belongs to the TRAFAC class TrmE-Era-EngA-EngB-Septin-like GTPase superfamily. EngA (Der) GTPase family.</text>
</comment>
<dbReference type="EMBL" id="AM494475">
    <property type="protein sequence ID" value="CAM80087.1"/>
    <property type="molecule type" value="Genomic_DNA"/>
</dbReference>
<dbReference type="RefSeq" id="WP_011944743.1">
    <property type="nucleotide sequence ID" value="NC_009488.1"/>
</dbReference>
<dbReference type="SMR" id="A5CDT2"/>
<dbReference type="KEGG" id="ots:OTBS_1021"/>
<dbReference type="eggNOG" id="COG1160">
    <property type="taxonomic scope" value="Bacteria"/>
</dbReference>
<dbReference type="HOGENOM" id="CLU_016077_5_0_5"/>
<dbReference type="Proteomes" id="UP000001565">
    <property type="component" value="Chromosome"/>
</dbReference>
<dbReference type="GO" id="GO:0005525">
    <property type="term" value="F:GTP binding"/>
    <property type="evidence" value="ECO:0007669"/>
    <property type="project" value="UniProtKB-UniRule"/>
</dbReference>
<dbReference type="GO" id="GO:0042254">
    <property type="term" value="P:ribosome biogenesis"/>
    <property type="evidence" value="ECO:0007669"/>
    <property type="project" value="UniProtKB-KW"/>
</dbReference>
<dbReference type="CDD" id="cd01894">
    <property type="entry name" value="EngA1"/>
    <property type="match status" value="1"/>
</dbReference>
<dbReference type="CDD" id="cd01895">
    <property type="entry name" value="EngA2"/>
    <property type="match status" value="1"/>
</dbReference>
<dbReference type="FunFam" id="3.30.300.20:FF:000004">
    <property type="entry name" value="GTPase Der"/>
    <property type="match status" value="1"/>
</dbReference>
<dbReference type="Gene3D" id="3.30.300.20">
    <property type="match status" value="1"/>
</dbReference>
<dbReference type="Gene3D" id="3.40.50.300">
    <property type="entry name" value="P-loop containing nucleotide triphosphate hydrolases"/>
    <property type="match status" value="2"/>
</dbReference>
<dbReference type="HAMAP" id="MF_00195">
    <property type="entry name" value="GTPase_Der"/>
    <property type="match status" value="1"/>
</dbReference>
<dbReference type="InterPro" id="IPR031166">
    <property type="entry name" value="G_ENGA"/>
</dbReference>
<dbReference type="InterPro" id="IPR006073">
    <property type="entry name" value="GTP-bd"/>
</dbReference>
<dbReference type="InterPro" id="IPR016484">
    <property type="entry name" value="GTPase_Der"/>
</dbReference>
<dbReference type="InterPro" id="IPR032859">
    <property type="entry name" value="KH_dom-like"/>
</dbReference>
<dbReference type="InterPro" id="IPR015946">
    <property type="entry name" value="KH_dom-like_a/b"/>
</dbReference>
<dbReference type="InterPro" id="IPR027417">
    <property type="entry name" value="P-loop_NTPase"/>
</dbReference>
<dbReference type="InterPro" id="IPR005225">
    <property type="entry name" value="Small_GTP-bd"/>
</dbReference>
<dbReference type="NCBIfam" id="TIGR03594">
    <property type="entry name" value="GTPase_EngA"/>
    <property type="match status" value="1"/>
</dbReference>
<dbReference type="NCBIfam" id="TIGR00231">
    <property type="entry name" value="small_GTP"/>
    <property type="match status" value="2"/>
</dbReference>
<dbReference type="PANTHER" id="PTHR43834">
    <property type="entry name" value="GTPASE DER"/>
    <property type="match status" value="1"/>
</dbReference>
<dbReference type="PANTHER" id="PTHR43834:SF6">
    <property type="entry name" value="GTPASE DER"/>
    <property type="match status" value="1"/>
</dbReference>
<dbReference type="Pfam" id="PF14714">
    <property type="entry name" value="KH_dom-like"/>
    <property type="match status" value="1"/>
</dbReference>
<dbReference type="Pfam" id="PF01926">
    <property type="entry name" value="MMR_HSR1"/>
    <property type="match status" value="2"/>
</dbReference>
<dbReference type="PIRSF" id="PIRSF006485">
    <property type="entry name" value="GTP-binding_EngA"/>
    <property type="match status" value="1"/>
</dbReference>
<dbReference type="PRINTS" id="PR00326">
    <property type="entry name" value="GTP1OBG"/>
</dbReference>
<dbReference type="SUPFAM" id="SSF52540">
    <property type="entry name" value="P-loop containing nucleoside triphosphate hydrolases"/>
    <property type="match status" value="2"/>
</dbReference>
<dbReference type="PROSITE" id="PS51712">
    <property type="entry name" value="G_ENGA"/>
    <property type="match status" value="2"/>
</dbReference>
<accession>A5CDT2</accession>
<sequence>MPQAIVALVGKPNVGKSTLFNRLSLREKSIVHDLPGITRDRKYAKANLFSDLIVVDTPGLEFAAAGSLEFNMMQQSLVAINEANIICFVVDAITGILPIDEECANLIRKHNKQSSTILVINKTEKPIILDKSYYKLGFSESICISAKHGQGIYELGDIIQNILSEDKKINVLTTTNTKCEYNQQCPELQLAIVGRPNCGKSTFINAILNEERVLTGPESGLTRNSVEVDWKYCGQLIRLVDTAGVRKKNAVTQSCELLSVNDTFKTIRFANIVIVMIDATRGLEQQDLSIISYAVNEGRGIVLVVNKCDLIKKKEEFQKELNRLVAYSVFQIKGINPIYISAKEKFNLESVLQKCVLTYASWQKRVTTGTLNQWLAKAMSNRPLPFQSHGKRVKIKYCTQTKARPPTIKLFCNNIESIDESYKRYLINNFKLNFDIAAGVPVRLSFVKGKNPYR</sequence>
<keyword id="KW-0342">GTP-binding</keyword>
<keyword id="KW-0547">Nucleotide-binding</keyword>
<keyword id="KW-1185">Reference proteome</keyword>
<keyword id="KW-0677">Repeat</keyword>
<keyword id="KW-0690">Ribosome biogenesis</keyword>
<evidence type="ECO:0000255" key="1">
    <source>
        <dbReference type="HAMAP-Rule" id="MF_00195"/>
    </source>
</evidence>
<reference key="1">
    <citation type="journal article" date="2007" name="Proc. Natl. Acad. Sci. U.S.A.">
        <title>The Orientia tsutsugamushi genome reveals massive proliferation of conjugative type IV secretion system and host-cell interaction genes.</title>
        <authorList>
            <person name="Cho N.-H."/>
            <person name="Kim H.-R."/>
            <person name="Lee J.-H."/>
            <person name="Kim S.-Y."/>
            <person name="Kim J."/>
            <person name="Cha S."/>
            <person name="Kim S.-Y."/>
            <person name="Darby A.C."/>
            <person name="Fuxelius H.-H."/>
            <person name="Yin J."/>
            <person name="Kim J.H."/>
            <person name="Kim J."/>
            <person name="Lee S.J."/>
            <person name="Koh Y.-S."/>
            <person name="Jang W.-J."/>
            <person name="Park K.-H."/>
            <person name="Andersson S.G.E."/>
            <person name="Choi M.-S."/>
            <person name="Kim I.-S."/>
        </authorList>
    </citation>
    <scope>NUCLEOTIDE SEQUENCE [LARGE SCALE GENOMIC DNA]</scope>
    <source>
        <strain>Boryong</strain>
    </source>
</reference>
<feature type="chain" id="PRO_1000099144" description="GTPase Der">
    <location>
        <begin position="1"/>
        <end position="454"/>
    </location>
</feature>
<feature type="domain" description="EngA-type G 1">
    <location>
        <begin position="4"/>
        <end position="167"/>
    </location>
</feature>
<feature type="domain" description="EngA-type G 2">
    <location>
        <begin position="188"/>
        <end position="363"/>
    </location>
</feature>
<feature type="domain" description="KH-like" evidence="1">
    <location>
        <begin position="364"/>
        <end position="450"/>
    </location>
</feature>
<feature type="binding site" evidence="1">
    <location>
        <begin position="10"/>
        <end position="17"/>
    </location>
    <ligand>
        <name>GTP</name>
        <dbReference type="ChEBI" id="CHEBI:37565"/>
        <label>1</label>
    </ligand>
</feature>
<feature type="binding site" evidence="1">
    <location>
        <begin position="56"/>
        <end position="60"/>
    </location>
    <ligand>
        <name>GTP</name>
        <dbReference type="ChEBI" id="CHEBI:37565"/>
        <label>1</label>
    </ligand>
</feature>
<feature type="binding site" evidence="1">
    <location>
        <begin position="121"/>
        <end position="124"/>
    </location>
    <ligand>
        <name>GTP</name>
        <dbReference type="ChEBI" id="CHEBI:37565"/>
        <label>1</label>
    </ligand>
</feature>
<feature type="binding site" evidence="1">
    <location>
        <begin position="194"/>
        <end position="201"/>
    </location>
    <ligand>
        <name>GTP</name>
        <dbReference type="ChEBI" id="CHEBI:37565"/>
        <label>2</label>
    </ligand>
</feature>
<feature type="binding site" evidence="1">
    <location>
        <begin position="241"/>
        <end position="245"/>
    </location>
    <ligand>
        <name>GTP</name>
        <dbReference type="ChEBI" id="CHEBI:37565"/>
        <label>2</label>
    </ligand>
</feature>
<feature type="binding site" evidence="1">
    <location>
        <begin position="306"/>
        <end position="309"/>
    </location>
    <ligand>
        <name>GTP</name>
        <dbReference type="ChEBI" id="CHEBI:37565"/>
        <label>2</label>
    </ligand>
</feature>
<protein>
    <recommendedName>
        <fullName evidence="1">GTPase Der</fullName>
    </recommendedName>
    <alternativeName>
        <fullName evidence="1">GTP-binding protein EngA</fullName>
    </alternativeName>
</protein>
<organism>
    <name type="scientific">Orientia tsutsugamushi (strain Boryong)</name>
    <name type="common">Rickettsia tsutsugamushi</name>
    <dbReference type="NCBI Taxonomy" id="357244"/>
    <lineage>
        <taxon>Bacteria</taxon>
        <taxon>Pseudomonadati</taxon>
        <taxon>Pseudomonadota</taxon>
        <taxon>Alphaproteobacteria</taxon>
        <taxon>Rickettsiales</taxon>
        <taxon>Rickettsiaceae</taxon>
        <taxon>Rickettsieae</taxon>
        <taxon>Orientia</taxon>
    </lineage>
</organism>
<name>DER_ORITB</name>
<proteinExistence type="inferred from homology"/>